<feature type="chain" id="PRO_0000429563" description="Zinc finger BED domain-containing protein RICESLEEPER 2">
    <location>
        <begin position="1"/>
        <end position="722"/>
    </location>
</feature>
<feature type="zinc finger region" description="BED-type" evidence="2">
    <location>
        <begin position="66"/>
        <end position="134"/>
    </location>
</feature>
<feature type="region of interest" description="Disordered" evidence="3">
    <location>
        <begin position="572"/>
        <end position="592"/>
    </location>
</feature>
<feature type="region of interest" description="HATC (Hobo-Ac-Tam3) domain">
    <location>
        <begin position="617"/>
        <end position="702"/>
    </location>
</feature>
<feature type="compositionally biased region" description="Polar residues" evidence="3">
    <location>
        <begin position="576"/>
        <end position="592"/>
    </location>
</feature>
<feature type="binding site" evidence="2">
    <location>
        <position position="89"/>
    </location>
    <ligand>
        <name>Zn(2+)</name>
        <dbReference type="ChEBI" id="CHEBI:29105"/>
    </ligand>
</feature>
<feature type="binding site" evidence="2">
    <location>
        <position position="92"/>
    </location>
    <ligand>
        <name>Zn(2+)</name>
        <dbReference type="ChEBI" id="CHEBI:29105"/>
    </ligand>
</feature>
<feature type="binding site" evidence="2">
    <location>
        <position position="113"/>
    </location>
    <ligand>
        <name>Zn(2+)</name>
        <dbReference type="ChEBI" id="CHEBI:29105"/>
    </ligand>
</feature>
<feature type="binding site" evidence="2">
    <location>
        <position position="127"/>
    </location>
    <ligand>
        <name>Zn(2+)</name>
        <dbReference type="ChEBI" id="CHEBI:29105"/>
    </ligand>
</feature>
<gene>
    <name type="ordered locus">Os03g0733400</name>
    <name type="ordered locus">LOC_Os03g52310</name>
    <name type="ORF">OsJ_12466</name>
    <name type="ORF">OSJNBa0027J18.23</name>
    <name type="ORF">OSJNBa0079G12.4</name>
</gene>
<protein>
    <recommendedName>
        <fullName>Zinc finger BED domain-containing protein RICESLEEPER 2</fullName>
    </recommendedName>
    <alternativeName>
        <fullName>Transposase-like protein RICESLEEPER 2</fullName>
    </alternativeName>
</protein>
<sequence>MTEETGNDFQMVQGYEIVPSNEEAHAEEVQGDELVLAEDLAQGDEVQVNGLVSAEMSTPPTSRRRRKKSLVWEHFTIEAVSGGATRACCKLCKQTFAYSSGSKIAGTSHLKRHITLGSCPIIKNQEHKLALTPAVGTDNDGEGTVERPSKRRYRYTGYANAAFDQDRSCSYLAKMIILHDYPLHIVQQPAFTTFIDSLQPRFRVVDVETMEGEVYAVYQKEKENLMQAFSTMPGRISLTIGLWTTSQTLGYVSLAGQFIDSEWKIHRRMLNFMMVSSPHSENALSEAISTSLSDWNMKDKLFTITLDNDCSSHDIYSANLRDYLSNKNNLMLKGQLFVVRCYAHILNAVAQDVIASIHGVIYNIRESIKFIKASPSREEKFAEIALQLEIPSTKTLCLDVTTQWNTTYLMLLAALDYKQAFSTLETSDDNYNEAPSAEDWKKVEAACNYLKLLYDSAHSIMAAANPTSNLFFHEAWKLQLELSNATGHEDPVFSSIAKDMHERFDKYWKDCNLVLAIAVVMDPRFKMKLVEFSYSKIYGVEAAKYVKVVDDAVHELYKEYVAQPLPLTPAYVEQGDGNNAPASENGTQATAPSTGDGLVDFDMYLSEIATSQPTKSELEQYLDESLTPRIQEFDILNWWKLNTLKFPTLSRMARDILAIPMSMVSSGNSIFSAGTGTRMLDDYRSSLRPEIVEALVCAKDWLQYLPATPEAPSTTLVKVDAP</sequence>
<name>RSLE2_ORYSJ</name>
<comment type="function">
    <text evidence="4">Transposase-like protein that is essential for plant growth and development. May regulate global gene expression by recruiting other cellular factors.</text>
</comment>
<comment type="subunit">
    <text evidence="1">Homodimer.</text>
</comment>
<comment type="subcellular location">
    <subcellularLocation>
        <location evidence="1">Nucleus</location>
    </subcellularLocation>
</comment>
<comment type="disruption phenotype">
    <text evidence="4">Reduced plant size and amount of seeds.</text>
</comment>
<keyword id="KW-0238">DNA-binding</keyword>
<keyword id="KW-0479">Metal-binding</keyword>
<keyword id="KW-0539">Nucleus</keyword>
<keyword id="KW-1185">Reference proteome</keyword>
<keyword id="KW-0804">Transcription</keyword>
<keyword id="KW-0805">Transcription regulation</keyword>
<keyword id="KW-0862">Zinc</keyword>
<keyword id="KW-0863">Zinc-finger</keyword>
<evidence type="ECO:0000250" key="1"/>
<evidence type="ECO:0000255" key="2">
    <source>
        <dbReference type="PROSITE-ProRule" id="PRU00027"/>
    </source>
</evidence>
<evidence type="ECO:0000256" key="3">
    <source>
        <dbReference type="SAM" id="MobiDB-lite"/>
    </source>
</evidence>
<evidence type="ECO:0000269" key="4">
    <source>
    </source>
</evidence>
<dbReference type="EMBL" id="AC096689">
    <property type="protein sequence ID" value="AAT78789.1"/>
    <property type="molecule type" value="Genomic_DNA"/>
</dbReference>
<dbReference type="EMBL" id="AC103550">
    <property type="protein sequence ID" value="AAT77879.1"/>
    <property type="molecule type" value="Genomic_DNA"/>
</dbReference>
<dbReference type="EMBL" id="DP000009">
    <property type="protein sequence ID" value="ABF98716.1"/>
    <property type="molecule type" value="Genomic_DNA"/>
</dbReference>
<dbReference type="EMBL" id="AP008209">
    <property type="protein sequence ID" value="BAF13087.1"/>
    <property type="molecule type" value="Genomic_DNA"/>
</dbReference>
<dbReference type="EMBL" id="AP014959">
    <property type="protein sequence ID" value="BAS86236.1"/>
    <property type="molecule type" value="Genomic_DNA"/>
</dbReference>
<dbReference type="EMBL" id="CM000140">
    <property type="protein sequence ID" value="EAZ28483.1"/>
    <property type="molecule type" value="Genomic_DNA"/>
</dbReference>
<dbReference type="EMBL" id="AK121128">
    <property type="protein sequence ID" value="BAH00332.1"/>
    <property type="molecule type" value="mRNA"/>
</dbReference>
<dbReference type="RefSeq" id="XP_015632123.1">
    <property type="nucleotide sequence ID" value="XM_015776637.1"/>
</dbReference>
<dbReference type="FunCoup" id="Q6AVI0">
    <property type="interactions" value="1559"/>
</dbReference>
<dbReference type="STRING" id="39947.Q6AVI0"/>
<dbReference type="PaxDb" id="39947-Q6AVI0"/>
<dbReference type="EnsemblPlants" id="Os03t0733400-01">
    <property type="protein sequence ID" value="Os03t0733400-01"/>
    <property type="gene ID" value="Os03g0733400"/>
</dbReference>
<dbReference type="Gramene" id="Os03t0733400-01">
    <property type="protein sequence ID" value="Os03t0733400-01"/>
    <property type="gene ID" value="Os03g0733400"/>
</dbReference>
<dbReference type="KEGG" id="dosa:Os03g0733400"/>
<dbReference type="eggNOG" id="KOG1121">
    <property type="taxonomic scope" value="Eukaryota"/>
</dbReference>
<dbReference type="HOGENOM" id="CLU_009123_1_2_1"/>
<dbReference type="InParanoid" id="Q6AVI0"/>
<dbReference type="OMA" id="FKCFAHT"/>
<dbReference type="OrthoDB" id="2610923at2759"/>
<dbReference type="Proteomes" id="UP000000763">
    <property type="component" value="Chromosome 3"/>
</dbReference>
<dbReference type="Proteomes" id="UP000007752">
    <property type="component" value="Chromosome 3"/>
</dbReference>
<dbReference type="Proteomes" id="UP000059680">
    <property type="component" value="Chromosome 3"/>
</dbReference>
<dbReference type="GO" id="GO:0005634">
    <property type="term" value="C:nucleus"/>
    <property type="evidence" value="ECO:0007669"/>
    <property type="project" value="UniProtKB-SubCell"/>
</dbReference>
<dbReference type="GO" id="GO:0003677">
    <property type="term" value="F:DNA binding"/>
    <property type="evidence" value="ECO:0007669"/>
    <property type="project" value="UniProtKB-KW"/>
</dbReference>
<dbReference type="GO" id="GO:0046983">
    <property type="term" value="F:protein dimerization activity"/>
    <property type="evidence" value="ECO:0007669"/>
    <property type="project" value="InterPro"/>
</dbReference>
<dbReference type="GO" id="GO:0008270">
    <property type="term" value="F:zinc ion binding"/>
    <property type="evidence" value="ECO:0007669"/>
    <property type="project" value="UniProtKB-KW"/>
</dbReference>
<dbReference type="GO" id="GO:0009791">
    <property type="term" value="P:post-embryonic development"/>
    <property type="evidence" value="ECO:0000315"/>
    <property type="project" value="UniProtKB"/>
</dbReference>
<dbReference type="InterPro" id="IPR025525">
    <property type="entry name" value="hAT-like_transposase_RNase-H"/>
</dbReference>
<dbReference type="InterPro" id="IPR008906">
    <property type="entry name" value="HATC_C_dom"/>
</dbReference>
<dbReference type="InterPro" id="IPR012337">
    <property type="entry name" value="RNaseH-like_sf"/>
</dbReference>
<dbReference type="InterPro" id="IPR003656">
    <property type="entry name" value="Znf_BED"/>
</dbReference>
<dbReference type="InterPro" id="IPR052035">
    <property type="entry name" value="ZnF_BED_domain_contain"/>
</dbReference>
<dbReference type="InterPro" id="IPR036236">
    <property type="entry name" value="Znf_C2H2_sf"/>
</dbReference>
<dbReference type="PANTHER" id="PTHR46481:SF10">
    <property type="entry name" value="ZINC FINGER BED DOMAIN-CONTAINING PROTEIN 39"/>
    <property type="match status" value="1"/>
</dbReference>
<dbReference type="PANTHER" id="PTHR46481">
    <property type="entry name" value="ZINC FINGER BED DOMAIN-CONTAINING PROTEIN 4"/>
    <property type="match status" value="1"/>
</dbReference>
<dbReference type="Pfam" id="PF05699">
    <property type="entry name" value="Dimer_Tnp_hAT"/>
    <property type="match status" value="1"/>
</dbReference>
<dbReference type="Pfam" id="PF14372">
    <property type="entry name" value="hAT-like_RNase-H"/>
    <property type="match status" value="1"/>
</dbReference>
<dbReference type="SMART" id="SM00614">
    <property type="entry name" value="ZnF_BED"/>
    <property type="match status" value="1"/>
</dbReference>
<dbReference type="SUPFAM" id="SSF57667">
    <property type="entry name" value="beta-beta-alpha zinc fingers"/>
    <property type="match status" value="1"/>
</dbReference>
<dbReference type="SUPFAM" id="SSF53098">
    <property type="entry name" value="Ribonuclease H-like"/>
    <property type="match status" value="1"/>
</dbReference>
<dbReference type="PROSITE" id="PS50808">
    <property type="entry name" value="ZF_BED"/>
    <property type="match status" value="1"/>
</dbReference>
<proteinExistence type="evidence at transcript level"/>
<accession>Q6AVI0</accession>
<accession>A0A0P0W2P2</accession>
<organism>
    <name type="scientific">Oryza sativa subsp. japonica</name>
    <name type="common">Rice</name>
    <dbReference type="NCBI Taxonomy" id="39947"/>
    <lineage>
        <taxon>Eukaryota</taxon>
        <taxon>Viridiplantae</taxon>
        <taxon>Streptophyta</taxon>
        <taxon>Embryophyta</taxon>
        <taxon>Tracheophyta</taxon>
        <taxon>Spermatophyta</taxon>
        <taxon>Magnoliopsida</taxon>
        <taxon>Liliopsida</taxon>
        <taxon>Poales</taxon>
        <taxon>Poaceae</taxon>
        <taxon>BOP clade</taxon>
        <taxon>Oryzoideae</taxon>
        <taxon>Oryzeae</taxon>
        <taxon>Oryzinae</taxon>
        <taxon>Oryza</taxon>
        <taxon>Oryza sativa</taxon>
    </lineage>
</organism>
<reference key="1">
    <citation type="journal article" date="2005" name="Genome Res.">
        <title>Sequence, annotation, and analysis of synteny between rice chromosome 3 and diverged grass species.</title>
        <authorList>
            <consortium name="The rice chromosome 3 sequencing consortium"/>
            <person name="Buell C.R."/>
            <person name="Yuan Q."/>
            <person name="Ouyang S."/>
            <person name="Liu J."/>
            <person name="Zhu W."/>
            <person name="Wang A."/>
            <person name="Maiti R."/>
            <person name="Haas B."/>
            <person name="Wortman J."/>
            <person name="Pertea M."/>
            <person name="Jones K.M."/>
            <person name="Kim M."/>
            <person name="Overton L."/>
            <person name="Tsitrin T."/>
            <person name="Fadrosh D."/>
            <person name="Bera J."/>
            <person name="Weaver B."/>
            <person name="Jin S."/>
            <person name="Johri S."/>
            <person name="Reardon M."/>
            <person name="Webb K."/>
            <person name="Hill J."/>
            <person name="Moffat K."/>
            <person name="Tallon L."/>
            <person name="Van Aken S."/>
            <person name="Lewis M."/>
            <person name="Utterback T."/>
            <person name="Feldblyum T."/>
            <person name="Zismann V."/>
            <person name="Iobst S."/>
            <person name="Hsiao J."/>
            <person name="de Vazeille A.R."/>
            <person name="Salzberg S.L."/>
            <person name="White O."/>
            <person name="Fraser C.M."/>
            <person name="Yu Y."/>
            <person name="Kim H."/>
            <person name="Rambo T."/>
            <person name="Currie J."/>
            <person name="Collura K."/>
            <person name="Kernodle-Thompson S."/>
            <person name="Wei F."/>
            <person name="Kudrna K."/>
            <person name="Ammiraju J.S.S."/>
            <person name="Luo M."/>
            <person name="Goicoechea J.L."/>
            <person name="Wing R.A."/>
            <person name="Henry D."/>
            <person name="Oates R."/>
            <person name="Palmer M."/>
            <person name="Pries G."/>
            <person name="Saski C."/>
            <person name="Simmons J."/>
            <person name="Soderlund C."/>
            <person name="Nelson W."/>
            <person name="de la Bastide M."/>
            <person name="Spiegel L."/>
            <person name="Nascimento L."/>
            <person name="Huang E."/>
            <person name="Preston R."/>
            <person name="Zutavern T."/>
            <person name="Palmer L."/>
            <person name="O'Shaughnessy A."/>
            <person name="Dike S."/>
            <person name="McCombie W.R."/>
            <person name="Minx P."/>
            <person name="Cordum H."/>
            <person name="Wilson R."/>
            <person name="Jin W."/>
            <person name="Lee H.R."/>
            <person name="Jiang J."/>
            <person name="Jackson S."/>
        </authorList>
    </citation>
    <scope>NUCLEOTIDE SEQUENCE [LARGE SCALE GENOMIC DNA]</scope>
    <source>
        <strain>cv. Nipponbare</strain>
    </source>
</reference>
<reference key="2">
    <citation type="journal article" date="2005" name="Nature">
        <title>The map-based sequence of the rice genome.</title>
        <authorList>
            <consortium name="International rice genome sequencing project (IRGSP)"/>
        </authorList>
    </citation>
    <scope>NUCLEOTIDE SEQUENCE [LARGE SCALE GENOMIC DNA]</scope>
    <source>
        <strain>cv. Nipponbare</strain>
    </source>
</reference>
<reference key="3">
    <citation type="journal article" date="2008" name="Nucleic Acids Res.">
        <title>The rice annotation project database (RAP-DB): 2008 update.</title>
        <authorList>
            <consortium name="The rice annotation project (RAP)"/>
        </authorList>
    </citation>
    <scope>GENOME REANNOTATION</scope>
    <source>
        <strain>cv. Nipponbare</strain>
    </source>
</reference>
<reference key="4">
    <citation type="journal article" date="2013" name="Rice">
        <title>Improvement of the Oryza sativa Nipponbare reference genome using next generation sequence and optical map data.</title>
        <authorList>
            <person name="Kawahara Y."/>
            <person name="de la Bastide M."/>
            <person name="Hamilton J.P."/>
            <person name="Kanamori H."/>
            <person name="McCombie W.R."/>
            <person name="Ouyang S."/>
            <person name="Schwartz D.C."/>
            <person name="Tanaka T."/>
            <person name="Wu J."/>
            <person name="Zhou S."/>
            <person name="Childs K.L."/>
            <person name="Davidson R.M."/>
            <person name="Lin H."/>
            <person name="Quesada-Ocampo L."/>
            <person name="Vaillancourt B."/>
            <person name="Sakai H."/>
            <person name="Lee S.S."/>
            <person name="Kim J."/>
            <person name="Numa H."/>
            <person name="Itoh T."/>
            <person name="Buell C.R."/>
            <person name="Matsumoto T."/>
        </authorList>
    </citation>
    <scope>GENOME REANNOTATION</scope>
    <source>
        <strain>cv. Nipponbare</strain>
    </source>
</reference>
<reference key="5">
    <citation type="journal article" date="2005" name="PLoS Biol.">
        <title>The genomes of Oryza sativa: a history of duplications.</title>
        <authorList>
            <person name="Yu J."/>
            <person name="Wang J."/>
            <person name="Lin W."/>
            <person name="Li S."/>
            <person name="Li H."/>
            <person name="Zhou J."/>
            <person name="Ni P."/>
            <person name="Dong W."/>
            <person name="Hu S."/>
            <person name="Zeng C."/>
            <person name="Zhang J."/>
            <person name="Zhang Y."/>
            <person name="Li R."/>
            <person name="Xu Z."/>
            <person name="Li S."/>
            <person name="Li X."/>
            <person name="Zheng H."/>
            <person name="Cong L."/>
            <person name="Lin L."/>
            <person name="Yin J."/>
            <person name="Geng J."/>
            <person name="Li G."/>
            <person name="Shi J."/>
            <person name="Liu J."/>
            <person name="Lv H."/>
            <person name="Li J."/>
            <person name="Wang J."/>
            <person name="Deng Y."/>
            <person name="Ran L."/>
            <person name="Shi X."/>
            <person name="Wang X."/>
            <person name="Wu Q."/>
            <person name="Li C."/>
            <person name="Ren X."/>
            <person name="Wang J."/>
            <person name="Wang X."/>
            <person name="Li D."/>
            <person name="Liu D."/>
            <person name="Zhang X."/>
            <person name="Ji Z."/>
            <person name="Zhao W."/>
            <person name="Sun Y."/>
            <person name="Zhang Z."/>
            <person name="Bao J."/>
            <person name="Han Y."/>
            <person name="Dong L."/>
            <person name="Ji J."/>
            <person name="Chen P."/>
            <person name="Wu S."/>
            <person name="Liu J."/>
            <person name="Xiao Y."/>
            <person name="Bu D."/>
            <person name="Tan J."/>
            <person name="Yang L."/>
            <person name="Ye C."/>
            <person name="Zhang J."/>
            <person name="Xu J."/>
            <person name="Zhou Y."/>
            <person name="Yu Y."/>
            <person name="Zhang B."/>
            <person name="Zhuang S."/>
            <person name="Wei H."/>
            <person name="Liu B."/>
            <person name="Lei M."/>
            <person name="Yu H."/>
            <person name="Li Y."/>
            <person name="Xu H."/>
            <person name="Wei S."/>
            <person name="He X."/>
            <person name="Fang L."/>
            <person name="Zhang Z."/>
            <person name="Zhang Y."/>
            <person name="Huang X."/>
            <person name="Su Z."/>
            <person name="Tong W."/>
            <person name="Li J."/>
            <person name="Tong Z."/>
            <person name="Li S."/>
            <person name="Ye J."/>
            <person name="Wang L."/>
            <person name="Fang L."/>
            <person name="Lei T."/>
            <person name="Chen C.-S."/>
            <person name="Chen H.-C."/>
            <person name="Xu Z."/>
            <person name="Li H."/>
            <person name="Huang H."/>
            <person name="Zhang F."/>
            <person name="Xu H."/>
            <person name="Li N."/>
            <person name="Zhao C."/>
            <person name="Li S."/>
            <person name="Dong L."/>
            <person name="Huang Y."/>
            <person name="Li L."/>
            <person name="Xi Y."/>
            <person name="Qi Q."/>
            <person name="Li W."/>
            <person name="Zhang B."/>
            <person name="Hu W."/>
            <person name="Zhang Y."/>
            <person name="Tian X."/>
            <person name="Jiao Y."/>
            <person name="Liang X."/>
            <person name="Jin J."/>
            <person name="Gao L."/>
            <person name="Zheng W."/>
            <person name="Hao B."/>
            <person name="Liu S.-M."/>
            <person name="Wang W."/>
            <person name="Yuan L."/>
            <person name="Cao M."/>
            <person name="McDermott J."/>
            <person name="Samudrala R."/>
            <person name="Wang J."/>
            <person name="Wong G.K.-S."/>
            <person name="Yang H."/>
        </authorList>
    </citation>
    <scope>NUCLEOTIDE SEQUENCE [LARGE SCALE GENOMIC DNA]</scope>
    <source>
        <strain>cv. Nipponbare</strain>
    </source>
</reference>
<reference key="6">
    <citation type="journal article" date="2003" name="Science">
        <title>Collection, mapping, and annotation of over 28,000 cDNA clones from japonica rice.</title>
        <authorList>
            <consortium name="The rice full-length cDNA consortium"/>
        </authorList>
    </citation>
    <scope>NUCLEOTIDE SEQUENCE [LARGE SCALE MRNA]</scope>
    <source>
        <strain>cv. Nipponbare</strain>
    </source>
</reference>
<reference key="7">
    <citation type="journal article" date="2012" name="BMC Plant Biol.">
        <title>The SLEEPER genes: a transposase-derived angiosperm-specific gene family.</title>
        <authorList>
            <person name="Knip M."/>
            <person name="de Pater S."/>
            <person name="Hooykaas P.J."/>
        </authorList>
    </citation>
    <scope>FUNCTION</scope>
    <scope>DISRUPTION PHENOTYPE</scope>
</reference>